<name>OPAJ_NEIGO</name>
<proteinExistence type="inferred from homology"/>
<gene>
    <name type="primary">opaJ</name>
</gene>
<feature type="signal peptide" evidence="1">
    <location>
        <begin position="1"/>
        <end position="23"/>
    </location>
</feature>
<feature type="chain" id="PRO_0000021914" description="Opacity protein opA58">
    <location>
        <begin position="24"/>
        <end position="260"/>
    </location>
</feature>
<comment type="function">
    <text>Implicated in a number of adherence functions. OPA proteins are implicated in pathogenesis and are subject to phase variation.</text>
</comment>
<comment type="subcellular location">
    <subcellularLocation>
        <location>Cell outer membrane</location>
    </subcellularLocation>
</comment>
<comment type="similarity">
    <text evidence="2">Belongs to the opacity porin family.</text>
</comment>
<accession>Q04882</accession>
<organism>
    <name type="scientific">Neisseria gonorrhoeae</name>
    <dbReference type="NCBI Taxonomy" id="485"/>
    <lineage>
        <taxon>Bacteria</taxon>
        <taxon>Pseudomonadati</taxon>
        <taxon>Pseudomonadota</taxon>
        <taxon>Betaproteobacteria</taxon>
        <taxon>Neisseriales</taxon>
        <taxon>Neisseriaceae</taxon>
        <taxon>Neisseria</taxon>
    </lineage>
</organism>
<protein>
    <recommendedName>
        <fullName>Opacity protein opA58</fullName>
    </recommendedName>
</protein>
<keyword id="KW-0998">Cell outer membrane</keyword>
<keyword id="KW-0472">Membrane</keyword>
<keyword id="KW-0732">Signal</keyword>
<keyword id="KW-0812">Transmembrane</keyword>
<keyword id="KW-1134">Transmembrane beta strand</keyword>
<evidence type="ECO:0000255" key="1"/>
<evidence type="ECO:0000305" key="2"/>
<sequence>MNPAPKKPSLLFSSLLFSSAAQAAGEDHGRGPYVQADLAYAYEHITHDYPEQTDPSKGKISTVSDYFRNIRTHSIHPRVSVGYDFGGWRIAADYARYRKWNNNKYSVSIKELLRNKVNGNRTDRKTENQENGTFHAVSSLGLSAVYDFKLNDKFKPYIGARVAYGHVRHSIDSTKKTTEVTTILHGPGTTPTVYPGKNTQDAHRESDSIRRVGLGAVAGVGIDITPNLTLDAGYRYHYWGRLENTRFKTHEASLGVRYRF</sequence>
<reference key="1">
    <citation type="journal article" date="1991" name="Mol. Microbiol.">
        <title>The opacity proteins of Neisseria gonorrhoeae strain MS11 are encoded by a family of 11 complete genes.</title>
        <authorList>
            <person name="Bhat K.S."/>
            <person name="Gibbs C.P."/>
            <person name="Barrera O."/>
            <person name="Morrison S.G."/>
            <person name="Jaehnig F."/>
            <person name="Stern A."/>
            <person name="Kupsch E.-M."/>
            <person name="Meyer T.F."/>
            <person name="Swanson J."/>
        </authorList>
    </citation>
    <scope>NUCLEOTIDE SEQUENCE [GENOMIC DNA]</scope>
    <source>
        <strain>MS11</strain>
    </source>
</reference>
<reference key="2">
    <citation type="journal article" date="1993" name="EMBO J.">
        <title>Variable opacity (Opa) outer membrane proteins account for the cell tropisms displayed by Neisseria gonorrhoeae for human leukocytes and epithelial cells.</title>
        <authorList>
            <person name="Kupsch E.-M."/>
            <person name="Knepper B."/>
            <person name="Kuroki T."/>
            <person name="Heuer I."/>
            <person name="Meyer T.F."/>
        </authorList>
    </citation>
    <scope>NUCLEOTIDE SEQUENCE [GENOMIC DNA] OF 24-260</scope>
    <source>
        <strain>MS11 / F3</strain>
    </source>
</reference>
<dbReference type="EMBL" id="X52371">
    <property type="status" value="NOT_ANNOTATED_CDS"/>
    <property type="molecule type" value="Genomic_DNA"/>
</dbReference>
<dbReference type="EMBL" id="Z18937">
    <property type="protein sequence ID" value="CAA79370.1"/>
    <property type="molecule type" value="Genomic_DNA"/>
</dbReference>
<dbReference type="PIR" id="S16611">
    <property type="entry name" value="S16611"/>
</dbReference>
<dbReference type="SMR" id="Q04882"/>
<dbReference type="Reactome" id="R-HSA-202733">
    <property type="pathway name" value="Cell surface interactions at the vascular wall"/>
</dbReference>
<dbReference type="GO" id="GO:0009279">
    <property type="term" value="C:cell outer membrane"/>
    <property type="evidence" value="ECO:0000304"/>
    <property type="project" value="Reactome"/>
</dbReference>
<dbReference type="GO" id="GO:0015288">
    <property type="term" value="F:porin activity"/>
    <property type="evidence" value="ECO:0007669"/>
    <property type="project" value="InterPro"/>
</dbReference>
<dbReference type="FunFam" id="2.40.160.20:FF:000005">
    <property type="entry name" value="Opacity protein opA54"/>
    <property type="match status" value="1"/>
</dbReference>
<dbReference type="Gene3D" id="2.40.160.20">
    <property type="match status" value="1"/>
</dbReference>
<dbReference type="InterPro" id="IPR011250">
    <property type="entry name" value="OMP/PagP_b-brl"/>
</dbReference>
<dbReference type="InterPro" id="IPR016373">
    <property type="entry name" value="Opacity"/>
</dbReference>
<dbReference type="InterPro" id="IPR003394">
    <property type="entry name" value="Porin_opacity"/>
</dbReference>
<dbReference type="Pfam" id="PF02462">
    <property type="entry name" value="Opacity"/>
    <property type="match status" value="1"/>
</dbReference>
<dbReference type="PIRSF" id="PIRSF002984">
    <property type="entry name" value="Opacity"/>
    <property type="match status" value="1"/>
</dbReference>
<dbReference type="SUPFAM" id="SSF56925">
    <property type="entry name" value="OMPA-like"/>
    <property type="match status" value="1"/>
</dbReference>